<feature type="chain" id="PRO_1000002069" description="SsrA-binding protein">
    <location>
        <begin position="1"/>
        <end position="158"/>
    </location>
</feature>
<feature type="region of interest" description="Disordered" evidence="2">
    <location>
        <begin position="133"/>
        <end position="158"/>
    </location>
</feature>
<feature type="compositionally biased region" description="Basic and acidic residues" evidence="2">
    <location>
        <begin position="133"/>
        <end position="148"/>
    </location>
</feature>
<feature type="compositionally biased region" description="Basic residues" evidence="2">
    <location>
        <begin position="149"/>
        <end position="158"/>
    </location>
</feature>
<name>SSRP_JANSC</name>
<organism>
    <name type="scientific">Jannaschia sp. (strain CCS1)</name>
    <dbReference type="NCBI Taxonomy" id="290400"/>
    <lineage>
        <taxon>Bacteria</taxon>
        <taxon>Pseudomonadati</taxon>
        <taxon>Pseudomonadota</taxon>
        <taxon>Alphaproteobacteria</taxon>
        <taxon>Rhodobacterales</taxon>
        <taxon>Roseobacteraceae</taxon>
        <taxon>Jannaschia</taxon>
    </lineage>
</organism>
<gene>
    <name evidence="1" type="primary">smpB</name>
    <name type="ordered locus">Jann_0031</name>
</gene>
<protein>
    <recommendedName>
        <fullName evidence="1">SsrA-binding protein</fullName>
    </recommendedName>
    <alternativeName>
        <fullName evidence="1">Small protein B</fullName>
    </alternativeName>
</protein>
<dbReference type="EMBL" id="CP000264">
    <property type="protein sequence ID" value="ABD52948.1"/>
    <property type="molecule type" value="Genomic_DNA"/>
</dbReference>
<dbReference type="RefSeq" id="WP_011453157.1">
    <property type="nucleotide sequence ID" value="NC_007802.1"/>
</dbReference>
<dbReference type="SMR" id="Q28WG4"/>
<dbReference type="STRING" id="290400.Jann_0031"/>
<dbReference type="KEGG" id="jan:Jann_0031"/>
<dbReference type="eggNOG" id="COG0691">
    <property type="taxonomic scope" value="Bacteria"/>
</dbReference>
<dbReference type="HOGENOM" id="CLU_108953_0_1_5"/>
<dbReference type="OrthoDB" id="9805462at2"/>
<dbReference type="Proteomes" id="UP000008326">
    <property type="component" value="Chromosome"/>
</dbReference>
<dbReference type="GO" id="GO:0005829">
    <property type="term" value="C:cytosol"/>
    <property type="evidence" value="ECO:0007669"/>
    <property type="project" value="TreeGrafter"/>
</dbReference>
<dbReference type="GO" id="GO:0003723">
    <property type="term" value="F:RNA binding"/>
    <property type="evidence" value="ECO:0007669"/>
    <property type="project" value="UniProtKB-UniRule"/>
</dbReference>
<dbReference type="GO" id="GO:0070929">
    <property type="term" value="P:trans-translation"/>
    <property type="evidence" value="ECO:0007669"/>
    <property type="project" value="UniProtKB-UniRule"/>
</dbReference>
<dbReference type="CDD" id="cd09294">
    <property type="entry name" value="SmpB"/>
    <property type="match status" value="1"/>
</dbReference>
<dbReference type="Gene3D" id="2.40.280.10">
    <property type="match status" value="1"/>
</dbReference>
<dbReference type="HAMAP" id="MF_00023">
    <property type="entry name" value="SmpB"/>
    <property type="match status" value="1"/>
</dbReference>
<dbReference type="InterPro" id="IPR023620">
    <property type="entry name" value="SmpB"/>
</dbReference>
<dbReference type="InterPro" id="IPR000037">
    <property type="entry name" value="SsrA-bd_prot"/>
</dbReference>
<dbReference type="NCBIfam" id="NF003843">
    <property type="entry name" value="PRK05422.1"/>
    <property type="match status" value="1"/>
</dbReference>
<dbReference type="NCBIfam" id="TIGR00086">
    <property type="entry name" value="smpB"/>
    <property type="match status" value="1"/>
</dbReference>
<dbReference type="PANTHER" id="PTHR30308:SF2">
    <property type="entry name" value="SSRA-BINDING PROTEIN"/>
    <property type="match status" value="1"/>
</dbReference>
<dbReference type="PANTHER" id="PTHR30308">
    <property type="entry name" value="TMRNA-BINDING COMPONENT OF TRANS-TRANSLATION TAGGING COMPLEX"/>
    <property type="match status" value="1"/>
</dbReference>
<dbReference type="Pfam" id="PF01668">
    <property type="entry name" value="SmpB"/>
    <property type="match status" value="1"/>
</dbReference>
<dbReference type="SUPFAM" id="SSF74982">
    <property type="entry name" value="Small protein B (SmpB)"/>
    <property type="match status" value="1"/>
</dbReference>
<proteinExistence type="inferred from homology"/>
<keyword id="KW-0963">Cytoplasm</keyword>
<keyword id="KW-1185">Reference proteome</keyword>
<keyword id="KW-0694">RNA-binding</keyword>
<comment type="function">
    <text evidence="1">Required for rescue of stalled ribosomes mediated by trans-translation. Binds to transfer-messenger RNA (tmRNA), required for stable association of tmRNA with ribosomes. tmRNA and SmpB together mimic tRNA shape, replacing the anticodon stem-loop with SmpB. tmRNA is encoded by the ssrA gene; the 2 termini fold to resemble tRNA(Ala) and it encodes a 'tag peptide', a short internal open reading frame. During trans-translation Ala-aminoacylated tmRNA acts like a tRNA, entering the A-site of stalled ribosomes, displacing the stalled mRNA. The ribosome then switches to translate the ORF on the tmRNA; the nascent peptide is terminated with the 'tag peptide' encoded by the tmRNA and targeted for degradation. The ribosome is freed to recommence translation, which seems to be the essential function of trans-translation.</text>
</comment>
<comment type="subcellular location">
    <subcellularLocation>
        <location evidence="1">Cytoplasm</location>
    </subcellularLocation>
    <text evidence="1">The tmRNA-SmpB complex associates with stalled 70S ribosomes.</text>
</comment>
<comment type="similarity">
    <text evidence="1">Belongs to the SmpB family.</text>
</comment>
<reference key="1">
    <citation type="submission" date="2006-02" db="EMBL/GenBank/DDBJ databases">
        <title>Complete sequence of chromosome of Jannaschia sp. CCS1.</title>
        <authorList>
            <consortium name="US DOE Joint Genome Institute"/>
            <person name="Copeland A."/>
            <person name="Lucas S."/>
            <person name="Lapidus A."/>
            <person name="Barry K."/>
            <person name="Detter J.C."/>
            <person name="Glavina del Rio T."/>
            <person name="Hammon N."/>
            <person name="Israni S."/>
            <person name="Pitluck S."/>
            <person name="Brettin T."/>
            <person name="Bruce D."/>
            <person name="Han C."/>
            <person name="Tapia R."/>
            <person name="Gilna P."/>
            <person name="Chertkov O."/>
            <person name="Saunders E."/>
            <person name="Schmutz J."/>
            <person name="Larimer F."/>
            <person name="Land M."/>
            <person name="Kyrpides N."/>
            <person name="Lykidis A."/>
            <person name="Moran M.A."/>
            <person name="Belas R."/>
            <person name="Ye W."/>
            <person name="Buchan A."/>
            <person name="Gonzalez J.M."/>
            <person name="Schell M.A."/>
            <person name="Richardson P."/>
        </authorList>
    </citation>
    <scope>NUCLEOTIDE SEQUENCE [LARGE SCALE GENOMIC DNA]</scope>
    <source>
        <strain>CCS1</strain>
    </source>
</reference>
<accession>Q28WG4</accession>
<sequence length="158" mass="18249">MAKKPDNPNYKVIAENRRARFDYAIESDLEVGIILEGSEVKSLRQGQSNIAESYAEVKEGELWLVNSYIAPYVQAKTFGHEEKRRRKMLVSRKELSKLWNATQREGMTLVPIVMYFNHKGLVKLKIGIAKGKKAQDKRETSAKRDWNRQKARLLKQNG</sequence>
<evidence type="ECO:0000255" key="1">
    <source>
        <dbReference type="HAMAP-Rule" id="MF_00023"/>
    </source>
</evidence>
<evidence type="ECO:0000256" key="2">
    <source>
        <dbReference type="SAM" id="MobiDB-lite"/>
    </source>
</evidence>